<comment type="function">
    <text evidence="5">In vivo, intraplantar injection in mice cause spontaneous pain behaviors and paw swelling (PubMed:36550366). PLA2 catalyzes the calcium-dependent hydrolysis of the 2-acyl groups in 3-sn-phosphoglycerides.</text>
</comment>
<comment type="catalytic activity">
    <reaction evidence="2">
        <text>a 1,2-diacyl-sn-glycero-3-phosphocholine + H2O = a 1-acyl-sn-glycero-3-phosphocholine + a fatty acid + H(+)</text>
        <dbReference type="Rhea" id="RHEA:15801"/>
        <dbReference type="ChEBI" id="CHEBI:15377"/>
        <dbReference type="ChEBI" id="CHEBI:15378"/>
        <dbReference type="ChEBI" id="CHEBI:28868"/>
        <dbReference type="ChEBI" id="CHEBI:57643"/>
        <dbReference type="ChEBI" id="CHEBI:58168"/>
        <dbReference type="EC" id="3.1.1.4"/>
    </reaction>
</comment>
<comment type="cofactor">
    <cofactor evidence="10">
        <name>Ca(2+)</name>
        <dbReference type="ChEBI" id="CHEBI:29108"/>
    </cofactor>
    <text evidence="10">Binds 1 Ca(2+) ion.</text>
</comment>
<comment type="subcellular location">
    <subcellularLocation>
        <location>Secreted</location>
    </subcellularLocation>
</comment>
<comment type="tissue specificity">
    <text>Expressed by the venom gland.</text>
</comment>
<comment type="PTM">
    <text evidence="8">N-glycosylated; contains mannose, N-acetylglucosamine and fucose alphal-6 and/or alphal-3 linked to the innermost N-acetylglucosamine.</text>
</comment>
<comment type="allergen">
    <text>Causes an allergic reaction in human.</text>
</comment>
<comment type="miscellaneous">
    <text>The secretion of this protein into venom follows a seasonal pattern. This variation is synchronized with melittin variation, i.e. their production increase in the same months.</text>
</comment>
<comment type="similarity">
    <text evidence="9">Belongs to the phospholipase A2 family. Group III subfamily.</text>
</comment>
<organism>
    <name type="scientific">Apis mellifera</name>
    <name type="common">Honeybee</name>
    <dbReference type="NCBI Taxonomy" id="7460"/>
    <lineage>
        <taxon>Eukaryota</taxon>
        <taxon>Metazoa</taxon>
        <taxon>Ecdysozoa</taxon>
        <taxon>Arthropoda</taxon>
        <taxon>Hexapoda</taxon>
        <taxon>Insecta</taxon>
        <taxon>Pterygota</taxon>
        <taxon>Neoptera</taxon>
        <taxon>Endopterygota</taxon>
        <taxon>Hymenoptera</taxon>
        <taxon>Apocrita</taxon>
        <taxon>Aculeata</taxon>
        <taxon>Apoidea</taxon>
        <taxon>Anthophila</taxon>
        <taxon>Apidae</taxon>
        <taxon>Apis</taxon>
    </lineage>
</organism>
<name>PA2_APIME</name>
<protein>
    <recommendedName>
        <fullName>Phospholipase A2</fullName>
        <shortName>bvPLA2</shortName>
        <ecNumber>3.1.1.4</ecNumber>
    </recommendedName>
    <alternativeName>
        <fullName>Allergen Api m I</fullName>
    </alternativeName>
    <alternativeName>
        <fullName>Phosphatidylcholine 2-acylhydrolase</fullName>
    </alternativeName>
    <allergenName>Api m 1</allergenName>
</protein>
<reference key="1">
    <citation type="journal article" date="2002" name="J. Biol. Chem.">
        <title>Bee venom phospholipase inhibits malaria parasite development in transgenic mosquitoes.</title>
        <authorList>
            <person name="Moreira L.A."/>
            <person name="Ito J."/>
            <person name="Ghosh A."/>
            <person name="Devenport M."/>
            <person name="Zieler H."/>
            <person name="Abraham E.G."/>
            <person name="Crisanti A."/>
            <person name="Nolan T."/>
            <person name="Catteruccia F."/>
            <person name="Jacobs-Lorena M."/>
        </authorList>
    </citation>
    <scope>NUCLEOTIDE SEQUENCE [MRNA]</scope>
    <source>
        <tissue>Venom gland</tissue>
    </source>
</reference>
<reference key="2">
    <citation type="journal article" date="2007" name="Gene">
        <title>Sequence analysis and phylogenetic relationship of genes encoding heterodimeric phospholipases A2 from the venom of the scorpion Anuroctonus phaiodactylus.</title>
        <authorList>
            <person name="Valdez-Cruz N.A."/>
            <person name="Segovia L."/>
            <person name="Corona M."/>
            <person name="Possani L.D."/>
        </authorList>
    </citation>
    <scope>NUCLEOTIDE SEQUENCE [GENOMIC DNA]</scope>
    <source>
        <tissue>Venom gland</tissue>
    </source>
</reference>
<reference key="3">
    <citation type="journal article" date="1989" name="Eur. J. Biochem.">
        <title>Analysis of the cDNA for phospholipase A2 from honeybee venom glands. The deduced amino acid sequence reveals homology to the corresponding vertebrate enzymes.</title>
        <authorList>
            <person name="Kuchler K."/>
            <person name="Gmachl M."/>
            <person name="Sippl M.J."/>
            <person name="Kreil G."/>
        </authorList>
    </citation>
    <scope>NUCLEOTIDE SEQUENCE [MRNA] OF 6-167</scope>
    <source>
        <tissue>Venom gland</tissue>
    </source>
</reference>
<reference key="4">
    <citation type="journal article" date="1974" name="Eur. J. Biochem.">
        <title>The amino-acid sequence and carbohydrate content of phospholipase A2 from bee venom.</title>
        <authorList>
            <person name="Shipolini R.A."/>
            <person name="Callewaert G.L."/>
            <person name="Cottrell R.C."/>
            <person name="Vernon C.A."/>
        </authorList>
    </citation>
    <scope>PROTEIN SEQUENCE OF 34-167</scope>
    <source>
        <tissue>Venom</tissue>
    </source>
</reference>
<reference key="5">
    <citation type="journal article" date="2010" name="Toxicon">
        <title>Africanized honey bee (Apis mellifera) venom profiling: Seasonal variation of melittin and phospholipase A(2) levels.</title>
        <authorList>
            <person name="Ferreira Junior R.S."/>
            <person name="Sciani J.M."/>
            <person name="Marques-Porto R."/>
            <person name="Junior A.L."/>
            <person name="Orsi R.D."/>
            <person name="Barraviera B."/>
            <person name="Pimenta D.C."/>
        </authorList>
    </citation>
    <scope>PROTEIN SEQUENCE OF 34-60</scope>
    <scope>IDENTIFICATION BY MASS SPECTROMETRY</scope>
    <scope>SEASONAL VARIATION</scope>
</reference>
<reference key="6">
    <citation type="journal article" date="1974" name="Eur. J. Biochem.">
        <title>The disulphide bridges of phospholipase A2 from bee venom.</title>
        <authorList>
            <person name="Shipolini R.A."/>
            <person name="Doonan S."/>
            <person name="Vernon C.A."/>
        </authorList>
    </citation>
    <scope>DISULFIDE BONDS</scope>
</reference>
<reference key="7">
    <citation type="journal article" date="1993" name="Eur. J. Biochem.">
        <title>Primary structures of the N-linked carbohydrate chains from honeybee venom phospholipase A2.</title>
        <authorList>
            <person name="Kubelka V."/>
            <person name="Altmann F."/>
            <person name="Staudacher E."/>
            <person name="Tretter V."/>
            <person name="Marz L."/>
            <person name="Hard K."/>
            <person name="Kamerling J.P."/>
            <person name="Vliegenthart J.F."/>
        </authorList>
    </citation>
    <scope>GLYCOSYLATION AT ASN-46</scope>
</reference>
<reference key="8">
    <citation type="journal article" date="2022" name="Sci. Rep.">
        <title>Venom composition and pain-causing toxins of the Australian great carpenter bee Xylocopa aruana.</title>
        <authorList>
            <person name="Shi N."/>
            <person name="Szanto T.G."/>
            <person name="He J."/>
            <person name="Schroeder C.I."/>
            <person name="Walker A.A."/>
            <person name="Deuis J.R."/>
            <person name="Vetter I."/>
            <person name="Panyi G."/>
            <person name="King G.F."/>
            <person name="Robinson S.D."/>
        </authorList>
    </citation>
    <scope>FUNCTION</scope>
    <scope>BIOASSAY</scope>
    <source>
        <tissue>Venom</tissue>
    </source>
</reference>
<reference key="9">
    <citation type="journal article" date="1990" name="Science">
        <title>Crystal structure of bee-venom phospholipase A2 in a complex with a transition-state analogue.</title>
        <authorList>
            <person name="Scott D.L."/>
            <person name="Otwinowski Z."/>
            <person name="Gelb M.H."/>
            <person name="Sigler P.B."/>
        </authorList>
    </citation>
    <scope>X-RAY CRYSTALLOGRAPHY (2.00 ANGSTROMS) OF 34-167 IN COMPLEX WITH CALCIUM ION</scope>
    <scope>COFACTOR</scope>
    <scope>DISULFIDE BONDS</scope>
</reference>
<evidence type="ECO:0000255" key="1"/>
<evidence type="ECO:0000255" key="2">
    <source>
        <dbReference type="PROSITE-ProRule" id="PRU10035"/>
    </source>
</evidence>
<evidence type="ECO:0000269" key="3">
    <source>
    </source>
</evidence>
<evidence type="ECO:0000269" key="4">
    <source>
    </source>
</evidence>
<evidence type="ECO:0000269" key="5">
    <source>
    </source>
</evidence>
<evidence type="ECO:0000269" key="6">
    <source>
    </source>
</evidence>
<evidence type="ECO:0000269" key="7">
    <source>
    </source>
</evidence>
<evidence type="ECO:0000269" key="8">
    <source>
    </source>
</evidence>
<evidence type="ECO:0000305" key="9"/>
<evidence type="ECO:0000305" key="10">
    <source>
    </source>
</evidence>
<evidence type="ECO:0007744" key="11">
    <source>
        <dbReference type="PDB" id="1POC"/>
    </source>
</evidence>
<evidence type="ECO:0007829" key="12">
    <source>
        <dbReference type="PDB" id="1POC"/>
    </source>
</evidence>
<evidence type="ECO:0007829" key="13">
    <source>
        <dbReference type="PDB" id="8PIH"/>
    </source>
</evidence>
<sequence>MQVVLGSLFLLLLSTSHGWQIRDRIGDNELEERIIYPGTLWCGHGNKSSGPNELGRFKHTDACCRTHDMCPDVMSAGESKHGLTNTASHTRLSCDCDDKFYDCLKNSADTISSYFVGKMYFNLIDTKCYKLEHPVTGCGERTEGRCLHYTVDKSKPKVYQWFDLRKY</sequence>
<dbReference type="EC" id="3.1.1.4"/>
<dbReference type="EMBL" id="AF438408">
    <property type="protein sequence ID" value="AAL30844.1"/>
    <property type="molecule type" value="mRNA"/>
</dbReference>
<dbReference type="EMBL" id="EF373554">
    <property type="protein sequence ID" value="ABQ28728.1"/>
    <property type="molecule type" value="Genomic_DNA"/>
</dbReference>
<dbReference type="EMBL" id="X16709">
    <property type="protein sequence ID" value="CAA34681.1"/>
    <property type="molecule type" value="mRNA"/>
</dbReference>
<dbReference type="PIR" id="S05650">
    <property type="entry name" value="PSHBA"/>
</dbReference>
<dbReference type="RefSeq" id="NP_001011614.1">
    <property type="nucleotide sequence ID" value="NM_001011614.1"/>
</dbReference>
<dbReference type="PDB" id="1POC">
    <property type="method" value="X-ray"/>
    <property type="resolution" value="2.00 A"/>
    <property type="chains" value="A=34-167"/>
</dbReference>
<dbReference type="PDB" id="8PIH">
    <property type="method" value="X-ray"/>
    <property type="resolution" value="1.76 A"/>
    <property type="chains" value="A=35-167"/>
</dbReference>
<dbReference type="PDB" id="8PKC">
    <property type="method" value="X-ray"/>
    <property type="resolution" value="4.10 A"/>
    <property type="chains" value="A/B=34-167"/>
</dbReference>
<dbReference type="PDBsum" id="1POC"/>
<dbReference type="PDBsum" id="8PIH"/>
<dbReference type="PDBsum" id="8PKC"/>
<dbReference type="SMR" id="P00630"/>
<dbReference type="FunCoup" id="P00630">
    <property type="interactions" value="57"/>
</dbReference>
<dbReference type="STRING" id="7460.P00630"/>
<dbReference type="BindingDB" id="P00630"/>
<dbReference type="ChEMBL" id="CHEMBL4807"/>
<dbReference type="Allergome" id="2493">
    <property type="allergen name" value="Api m A1-A2"/>
</dbReference>
<dbReference type="Allergome" id="2778">
    <property type="allergen name" value="Api m A1-A2-A3"/>
</dbReference>
<dbReference type="Allergome" id="3088">
    <property type="allergen name" value="Api m 1.0101"/>
</dbReference>
<dbReference type="Allergome" id="45">
    <property type="allergen name" value="Api m 1"/>
</dbReference>
<dbReference type="GlyConnect" id="496">
    <property type="glycosylation" value="16 N-Linked glycans (1 site)"/>
</dbReference>
<dbReference type="PaxDb" id="7460-GB48228-PA"/>
<dbReference type="EnsemblMetazoa" id="NM_001011614">
    <property type="protein sequence ID" value="NP_001011614"/>
    <property type="gene ID" value="GeneID_406141"/>
</dbReference>
<dbReference type="GeneID" id="406141"/>
<dbReference type="KEGG" id="ame:406141"/>
<dbReference type="CTD" id="124432273"/>
<dbReference type="eggNOG" id="ENOG502S1MS">
    <property type="taxonomic scope" value="Eukaryota"/>
</dbReference>
<dbReference type="HOGENOM" id="CLU_118255_0_0_1"/>
<dbReference type="InParanoid" id="P00630"/>
<dbReference type="OMA" id="TTGCKEY"/>
<dbReference type="OrthoDB" id="10059604at2759"/>
<dbReference type="PhylomeDB" id="P00630"/>
<dbReference type="BRENDA" id="3.1.1.4">
    <property type="organism ID" value="387"/>
</dbReference>
<dbReference type="EvolutionaryTrace" id="P00630"/>
<dbReference type="PRO" id="PR:P00630"/>
<dbReference type="Proteomes" id="UP000005203">
    <property type="component" value="Linkage group LG13"/>
</dbReference>
<dbReference type="GO" id="GO:0005576">
    <property type="term" value="C:extracellular region"/>
    <property type="evidence" value="ECO:0007669"/>
    <property type="project" value="UniProtKB-SubCell"/>
</dbReference>
<dbReference type="GO" id="GO:0005509">
    <property type="term" value="F:calcium ion binding"/>
    <property type="evidence" value="ECO:0000314"/>
    <property type="project" value="UniProtKB"/>
</dbReference>
<dbReference type="GO" id="GO:0004623">
    <property type="term" value="F:phospholipase A2 activity"/>
    <property type="evidence" value="ECO:0007669"/>
    <property type="project" value="UniProtKB-EC"/>
</dbReference>
<dbReference type="GO" id="GO:0050482">
    <property type="term" value="P:arachidonate secretion"/>
    <property type="evidence" value="ECO:0007669"/>
    <property type="project" value="InterPro"/>
</dbReference>
<dbReference type="GO" id="GO:0016042">
    <property type="term" value="P:lipid catabolic process"/>
    <property type="evidence" value="ECO:0007669"/>
    <property type="project" value="UniProtKB-KW"/>
</dbReference>
<dbReference type="GO" id="GO:0006644">
    <property type="term" value="P:phospholipid metabolic process"/>
    <property type="evidence" value="ECO:0007669"/>
    <property type="project" value="InterPro"/>
</dbReference>
<dbReference type="CDD" id="cd04704">
    <property type="entry name" value="PLA2_bee_venom_like"/>
    <property type="match status" value="1"/>
</dbReference>
<dbReference type="FunFam" id="1.20.90.10:FF:000002">
    <property type="entry name" value="Phospholipase A2 group III"/>
    <property type="match status" value="1"/>
</dbReference>
<dbReference type="Gene3D" id="1.20.90.10">
    <property type="entry name" value="Phospholipase A2 domain"/>
    <property type="match status" value="1"/>
</dbReference>
<dbReference type="InterPro" id="IPR016090">
    <property type="entry name" value="PLipase_A2_dom"/>
</dbReference>
<dbReference type="InterPro" id="IPR036444">
    <property type="entry name" value="PLipase_A2_dom_sf"/>
</dbReference>
<dbReference type="InterPro" id="IPR033113">
    <property type="entry name" value="PLipase_A2_His_AS"/>
</dbReference>
<dbReference type="PANTHER" id="PTHR12253">
    <property type="entry name" value="RH14732P"/>
    <property type="match status" value="1"/>
</dbReference>
<dbReference type="Pfam" id="PF05826">
    <property type="entry name" value="Phospholip_A2_2"/>
    <property type="match status" value="1"/>
</dbReference>
<dbReference type="SMART" id="SM00085">
    <property type="entry name" value="PA2c"/>
    <property type="match status" value="1"/>
</dbReference>
<dbReference type="SUPFAM" id="SSF48619">
    <property type="entry name" value="Phospholipase A2, PLA2"/>
    <property type="match status" value="1"/>
</dbReference>
<dbReference type="PROSITE" id="PS00118">
    <property type="entry name" value="PA2_HIS"/>
    <property type="match status" value="1"/>
</dbReference>
<accession>P00630</accession>
<accession>A5JGM7</accession>
<accession>Q8WPH5</accession>
<feature type="signal peptide" evidence="1">
    <location>
        <begin position="1"/>
        <end position="18"/>
    </location>
</feature>
<feature type="propeptide" id="PRO_0000022982" evidence="3 6">
    <location>
        <begin position="19"/>
        <end position="33"/>
    </location>
</feature>
<feature type="chain" id="PRO_0000022983" description="Phospholipase A2" evidence="4">
    <location>
        <begin position="34"/>
        <end position="167"/>
    </location>
</feature>
<feature type="active site" evidence="10">
    <location>
        <position position="67"/>
    </location>
</feature>
<feature type="active site" evidence="10">
    <location>
        <position position="97"/>
    </location>
</feature>
<feature type="binding site" evidence="4 11">
    <location>
        <position position="41"/>
    </location>
    <ligand>
        <name>Ca(2+)</name>
        <dbReference type="ChEBI" id="CHEBI:29108"/>
    </ligand>
</feature>
<feature type="binding site" evidence="4 11">
    <location>
        <position position="43"/>
    </location>
    <ligand>
        <name>Ca(2+)</name>
        <dbReference type="ChEBI" id="CHEBI:29108"/>
    </ligand>
</feature>
<feature type="binding site" evidence="4 11">
    <location>
        <position position="45"/>
    </location>
    <ligand>
        <name>Ca(2+)</name>
        <dbReference type="ChEBI" id="CHEBI:29108"/>
    </ligand>
</feature>
<feature type="binding site" evidence="4 11">
    <location>
        <position position="68"/>
    </location>
    <ligand>
        <name>Ca(2+)</name>
        <dbReference type="ChEBI" id="CHEBI:29108"/>
    </ligand>
</feature>
<feature type="glycosylation site" id="CAR_000001" description="N-linked (GlcNAc...) asparagine" evidence="8">
    <location>
        <position position="46"/>
    </location>
</feature>
<feature type="disulfide bond" evidence="4 7">
    <location>
        <begin position="42"/>
        <end position="64"/>
    </location>
</feature>
<feature type="disulfide bond" evidence="4 7">
    <location>
        <begin position="63"/>
        <end position="103"/>
    </location>
</feature>
<feature type="disulfide bond" evidence="4 7">
    <location>
        <begin position="70"/>
        <end position="96"/>
    </location>
</feature>
<feature type="disulfide bond" evidence="4 7">
    <location>
        <begin position="94"/>
        <end position="128"/>
    </location>
</feature>
<feature type="disulfide bond" evidence="4 7">
    <location>
        <begin position="138"/>
        <end position="146"/>
    </location>
</feature>
<feature type="sequence conflict" description="In Ref. 4; AA sequence." evidence="9" ref="4">
    <original>D</original>
    <variation>N</variation>
    <location>
        <position position="72"/>
    </location>
</feature>
<feature type="sequence conflict" description="In Ref. 4; AA sequence." evidence="9" ref="4">
    <original>N</original>
    <variation>D</variation>
    <location>
        <position position="85"/>
    </location>
</feature>
<feature type="sequence conflict" description="In Ref. 4; AA sequence." evidence="9" ref="4">
    <location>
        <begin position="89"/>
        <end position="90"/>
    </location>
</feature>
<feature type="sequence conflict" description="In Ref. 4; AA sequence." evidence="9" ref="4">
    <original>DCDDK</original>
    <variation>NNND</variation>
    <location>
        <begin position="95"/>
        <end position="99"/>
    </location>
</feature>
<feature type="sequence conflict" description="In Ref. 4; AA sequence." evidence="9" ref="4">
    <location>
        <begin position="102"/>
        <end position="104"/>
    </location>
</feature>
<feature type="sequence conflict" description="In Ref. 4; AA sequence." evidence="9" ref="4">
    <original>D</original>
    <variation>N</variation>
    <location>
        <position position="125"/>
    </location>
</feature>
<feature type="turn" evidence="13">
    <location>
        <begin position="40"/>
        <end position="42"/>
    </location>
</feature>
<feature type="helix" evidence="13">
    <location>
        <begin position="59"/>
        <end position="68"/>
    </location>
</feature>
<feature type="strand" evidence="12">
    <location>
        <begin position="71"/>
        <end position="74"/>
    </location>
</feature>
<feature type="strand" evidence="13">
    <location>
        <begin position="87"/>
        <end position="89"/>
    </location>
</feature>
<feature type="strand" evidence="13">
    <location>
        <begin position="91"/>
        <end position="93"/>
    </location>
</feature>
<feature type="helix" evidence="13">
    <location>
        <begin position="94"/>
        <end position="106"/>
    </location>
</feature>
<feature type="helix" evidence="13">
    <location>
        <begin position="110"/>
        <end position="121"/>
    </location>
</feature>
<feature type="strand" evidence="13">
    <location>
        <begin position="127"/>
        <end position="133"/>
    </location>
</feature>
<feature type="strand" evidence="13">
    <location>
        <begin position="135"/>
        <end position="142"/>
    </location>
</feature>
<feature type="strand" evidence="13">
    <location>
        <begin position="145"/>
        <end position="151"/>
    </location>
</feature>
<feature type="strand" evidence="13">
    <location>
        <begin position="158"/>
        <end position="164"/>
    </location>
</feature>
<keyword id="KW-0002">3D-structure</keyword>
<keyword id="KW-0020">Allergen</keyword>
<keyword id="KW-0106">Calcium</keyword>
<keyword id="KW-0903">Direct protein sequencing</keyword>
<keyword id="KW-1015">Disulfide bond</keyword>
<keyword id="KW-0325">Glycoprotein</keyword>
<keyword id="KW-0378">Hydrolase</keyword>
<keyword id="KW-0442">Lipid degradation</keyword>
<keyword id="KW-0443">Lipid metabolism</keyword>
<keyword id="KW-0479">Metal-binding</keyword>
<keyword id="KW-1185">Reference proteome</keyword>
<keyword id="KW-0964">Secreted</keyword>
<keyword id="KW-0732">Signal</keyword>
<proteinExistence type="evidence at protein level"/>